<proteinExistence type="inferred from homology"/>
<dbReference type="EMBL" id="CP001391">
    <property type="protein sequence ID" value="ACN95568.1"/>
    <property type="molecule type" value="Genomic_DNA"/>
</dbReference>
<dbReference type="RefSeq" id="WP_006279340.1">
    <property type="nucleotide sequence ID" value="NZ_MKIF01000050.1"/>
</dbReference>
<dbReference type="SMR" id="C0R3S6"/>
<dbReference type="STRING" id="66084.WRi_008290"/>
<dbReference type="KEGG" id="wri:WRi_008290"/>
<dbReference type="HOGENOM" id="CLU_123265_0_1_5"/>
<dbReference type="Proteomes" id="UP000001293">
    <property type="component" value="Chromosome"/>
</dbReference>
<dbReference type="GO" id="GO:1990904">
    <property type="term" value="C:ribonucleoprotein complex"/>
    <property type="evidence" value="ECO:0007669"/>
    <property type="project" value="UniProtKB-KW"/>
</dbReference>
<dbReference type="GO" id="GO:0005840">
    <property type="term" value="C:ribosome"/>
    <property type="evidence" value="ECO:0007669"/>
    <property type="project" value="UniProtKB-KW"/>
</dbReference>
<dbReference type="GO" id="GO:0019843">
    <property type="term" value="F:rRNA binding"/>
    <property type="evidence" value="ECO:0007669"/>
    <property type="project" value="UniProtKB-UniRule"/>
</dbReference>
<dbReference type="GO" id="GO:0003735">
    <property type="term" value="F:structural constituent of ribosome"/>
    <property type="evidence" value="ECO:0007669"/>
    <property type="project" value="InterPro"/>
</dbReference>
<dbReference type="GO" id="GO:0000027">
    <property type="term" value="P:ribosomal large subunit assembly"/>
    <property type="evidence" value="ECO:0007669"/>
    <property type="project" value="UniProtKB-UniRule"/>
</dbReference>
<dbReference type="GO" id="GO:0006412">
    <property type="term" value="P:translation"/>
    <property type="evidence" value="ECO:0007669"/>
    <property type="project" value="InterPro"/>
</dbReference>
<dbReference type="CDD" id="cd07026">
    <property type="entry name" value="Ribosomal_L20"/>
    <property type="match status" value="1"/>
</dbReference>
<dbReference type="FunFam" id="1.10.1900.20:FF:000001">
    <property type="entry name" value="50S ribosomal protein L20"/>
    <property type="match status" value="1"/>
</dbReference>
<dbReference type="Gene3D" id="6.10.160.10">
    <property type="match status" value="1"/>
</dbReference>
<dbReference type="Gene3D" id="1.10.1900.20">
    <property type="entry name" value="Ribosomal protein L20"/>
    <property type="match status" value="1"/>
</dbReference>
<dbReference type="HAMAP" id="MF_00382">
    <property type="entry name" value="Ribosomal_bL20"/>
    <property type="match status" value="1"/>
</dbReference>
<dbReference type="InterPro" id="IPR005813">
    <property type="entry name" value="Ribosomal_bL20"/>
</dbReference>
<dbReference type="InterPro" id="IPR049946">
    <property type="entry name" value="RIBOSOMAL_L20_CS"/>
</dbReference>
<dbReference type="InterPro" id="IPR035566">
    <property type="entry name" value="Ribosomal_protein_bL20_C"/>
</dbReference>
<dbReference type="NCBIfam" id="TIGR01032">
    <property type="entry name" value="rplT_bact"/>
    <property type="match status" value="1"/>
</dbReference>
<dbReference type="PANTHER" id="PTHR10986">
    <property type="entry name" value="39S RIBOSOMAL PROTEIN L20"/>
    <property type="match status" value="1"/>
</dbReference>
<dbReference type="Pfam" id="PF00453">
    <property type="entry name" value="Ribosomal_L20"/>
    <property type="match status" value="1"/>
</dbReference>
<dbReference type="PRINTS" id="PR00062">
    <property type="entry name" value="RIBOSOMALL20"/>
</dbReference>
<dbReference type="SUPFAM" id="SSF74731">
    <property type="entry name" value="Ribosomal protein L20"/>
    <property type="match status" value="1"/>
</dbReference>
<dbReference type="PROSITE" id="PS00937">
    <property type="entry name" value="RIBOSOMAL_L20"/>
    <property type="match status" value="1"/>
</dbReference>
<sequence>MARVKRGVTTHARHKKILKLAKGYRGRAKSCYRIALQRVEKALQYAYRDRRTRKRDFRSLWIIRINAAAREHGLTYGRFMHGLTLAGIDLNRKILAEMAVNYKDDFAKLVETVSGKLAENS</sequence>
<protein>
    <recommendedName>
        <fullName evidence="1">Large ribosomal subunit protein bL20</fullName>
    </recommendedName>
    <alternativeName>
        <fullName evidence="2">50S ribosomal protein L20</fullName>
    </alternativeName>
</protein>
<organism>
    <name type="scientific">Wolbachia sp. subsp. Drosophila simulans (strain wRi)</name>
    <dbReference type="NCBI Taxonomy" id="66084"/>
    <lineage>
        <taxon>Bacteria</taxon>
        <taxon>Pseudomonadati</taxon>
        <taxon>Pseudomonadota</taxon>
        <taxon>Alphaproteobacteria</taxon>
        <taxon>Rickettsiales</taxon>
        <taxon>Anaplasmataceae</taxon>
        <taxon>Wolbachieae</taxon>
        <taxon>Wolbachia</taxon>
    </lineage>
</organism>
<evidence type="ECO:0000255" key="1">
    <source>
        <dbReference type="HAMAP-Rule" id="MF_00382"/>
    </source>
</evidence>
<evidence type="ECO:0000305" key="2"/>
<accession>C0R3S6</accession>
<feature type="chain" id="PRO_1000134235" description="Large ribosomal subunit protein bL20">
    <location>
        <begin position="1"/>
        <end position="121"/>
    </location>
</feature>
<comment type="function">
    <text evidence="1">Binds directly to 23S ribosomal RNA and is necessary for the in vitro assembly process of the 50S ribosomal subunit. It is not involved in the protein synthesizing functions of that subunit.</text>
</comment>
<comment type="similarity">
    <text evidence="1">Belongs to the bacterial ribosomal protein bL20 family.</text>
</comment>
<name>RL20_WOLWR</name>
<gene>
    <name evidence="1" type="primary">rplT</name>
    <name type="ordered locus">WRi_008290</name>
</gene>
<keyword id="KW-0687">Ribonucleoprotein</keyword>
<keyword id="KW-0689">Ribosomal protein</keyword>
<keyword id="KW-0694">RNA-binding</keyword>
<keyword id="KW-0699">rRNA-binding</keyword>
<reference key="1">
    <citation type="journal article" date="2009" name="Proc. Natl. Acad. Sci. U.S.A.">
        <title>The mosaic genome structure of the Wolbachia wRi strain infecting Drosophila simulans.</title>
        <authorList>
            <person name="Klasson L."/>
            <person name="Westberg J."/>
            <person name="Sapountzis P."/>
            <person name="Naeslund K."/>
            <person name="Lutnaes Y."/>
            <person name="Darby A.C."/>
            <person name="Veneti Z."/>
            <person name="Chen L."/>
            <person name="Braig H.R."/>
            <person name="Garrett R."/>
            <person name="Bourtzis K."/>
            <person name="Andersson S.G."/>
        </authorList>
    </citation>
    <scope>NUCLEOTIDE SEQUENCE [LARGE SCALE GENOMIC DNA]</scope>
    <source>
        <strain>wRi</strain>
    </source>
</reference>